<dbReference type="EMBL" id="AJ719549">
    <property type="protein sequence ID" value="CAG31208.1"/>
    <property type="molecule type" value="mRNA"/>
</dbReference>
<dbReference type="RefSeq" id="NP_001025760.1">
    <property type="nucleotide sequence ID" value="NM_001030589.1"/>
</dbReference>
<dbReference type="SMR" id="Q5ZM35"/>
<dbReference type="FunCoup" id="Q5ZM35">
    <property type="interactions" value="1916"/>
</dbReference>
<dbReference type="STRING" id="9031.ENSGALP00000052343"/>
<dbReference type="PaxDb" id="9031-ENSGALP00000006326"/>
<dbReference type="GeneID" id="415940"/>
<dbReference type="KEGG" id="gga:415940"/>
<dbReference type="CTD" id="11344"/>
<dbReference type="VEuPathDB" id="HostDB:geneid_415940"/>
<dbReference type="eggNOG" id="KOG1747">
    <property type="taxonomic scope" value="Eukaryota"/>
</dbReference>
<dbReference type="InParanoid" id="Q5ZM35"/>
<dbReference type="OrthoDB" id="10006997at2759"/>
<dbReference type="PhylomeDB" id="Q5ZM35"/>
<dbReference type="PRO" id="PR:Q5ZM35"/>
<dbReference type="Proteomes" id="UP000000539">
    <property type="component" value="Unassembled WGS sequence"/>
</dbReference>
<dbReference type="GO" id="GO:0005884">
    <property type="term" value="C:actin filament"/>
    <property type="evidence" value="ECO:0000318"/>
    <property type="project" value="GO_Central"/>
</dbReference>
<dbReference type="GO" id="GO:0005737">
    <property type="term" value="C:cytoplasm"/>
    <property type="evidence" value="ECO:0000318"/>
    <property type="project" value="GO_Central"/>
</dbReference>
<dbReference type="GO" id="GO:0030016">
    <property type="term" value="C:myofibril"/>
    <property type="evidence" value="ECO:0000318"/>
    <property type="project" value="GO_Central"/>
</dbReference>
<dbReference type="GO" id="GO:0048471">
    <property type="term" value="C:perinuclear region of cytoplasm"/>
    <property type="evidence" value="ECO:0007669"/>
    <property type="project" value="UniProtKB-SubCell"/>
</dbReference>
<dbReference type="GO" id="GO:0051015">
    <property type="term" value="F:actin filament binding"/>
    <property type="evidence" value="ECO:0000318"/>
    <property type="project" value="GO_Central"/>
</dbReference>
<dbReference type="GO" id="GO:0003785">
    <property type="term" value="F:actin monomer binding"/>
    <property type="evidence" value="ECO:0000318"/>
    <property type="project" value="GO_Central"/>
</dbReference>
<dbReference type="GO" id="GO:0030042">
    <property type="term" value="P:actin filament depolymerization"/>
    <property type="evidence" value="ECO:0000318"/>
    <property type="project" value="GO_Central"/>
</dbReference>
<dbReference type="GO" id="GO:0051016">
    <property type="term" value="P:barbed-end actin filament capping"/>
    <property type="evidence" value="ECO:0000318"/>
    <property type="project" value="GO_Central"/>
</dbReference>
<dbReference type="GO" id="GO:0010976">
    <property type="term" value="P:positive regulation of neuron projection development"/>
    <property type="evidence" value="ECO:0000318"/>
    <property type="project" value="GO_Central"/>
</dbReference>
<dbReference type="GO" id="GO:0010591">
    <property type="term" value="P:regulation of lamellipodium assembly"/>
    <property type="evidence" value="ECO:0000318"/>
    <property type="project" value="GO_Central"/>
</dbReference>
<dbReference type="CDD" id="cd11284">
    <property type="entry name" value="ADF_Twf-C_like"/>
    <property type="match status" value="1"/>
</dbReference>
<dbReference type="CDD" id="cd11285">
    <property type="entry name" value="ADF_Twf-N_like"/>
    <property type="match status" value="1"/>
</dbReference>
<dbReference type="FunFam" id="3.40.20.10:FF:000007">
    <property type="entry name" value="Twinfilin-1 isoform 1"/>
    <property type="match status" value="1"/>
</dbReference>
<dbReference type="FunFam" id="3.40.20.10:FF:000012">
    <property type="entry name" value="Twinfilin-1 isoform 1"/>
    <property type="match status" value="1"/>
</dbReference>
<dbReference type="Gene3D" id="3.40.20.10">
    <property type="entry name" value="Severin"/>
    <property type="match status" value="2"/>
</dbReference>
<dbReference type="InterPro" id="IPR002108">
    <property type="entry name" value="ADF-H"/>
</dbReference>
<dbReference type="InterPro" id="IPR029006">
    <property type="entry name" value="ADF-H/Gelsolin-like_dom_sf"/>
</dbReference>
<dbReference type="InterPro" id="IPR028458">
    <property type="entry name" value="Twinfilin"/>
</dbReference>
<dbReference type="PANTHER" id="PTHR13759">
    <property type="entry name" value="TWINFILIN"/>
    <property type="match status" value="1"/>
</dbReference>
<dbReference type="PANTHER" id="PTHR13759:SF9">
    <property type="entry name" value="TWINFILIN-2"/>
    <property type="match status" value="1"/>
</dbReference>
<dbReference type="Pfam" id="PF00241">
    <property type="entry name" value="Cofilin_ADF"/>
    <property type="match status" value="2"/>
</dbReference>
<dbReference type="SMART" id="SM00102">
    <property type="entry name" value="ADF"/>
    <property type="match status" value="2"/>
</dbReference>
<dbReference type="SUPFAM" id="SSF55753">
    <property type="entry name" value="Actin depolymerizing proteins"/>
    <property type="match status" value="2"/>
</dbReference>
<dbReference type="PROSITE" id="PS51263">
    <property type="entry name" value="ADF_H"/>
    <property type="match status" value="2"/>
</dbReference>
<organism>
    <name type="scientific">Gallus gallus</name>
    <name type="common">Chicken</name>
    <dbReference type="NCBI Taxonomy" id="9031"/>
    <lineage>
        <taxon>Eukaryota</taxon>
        <taxon>Metazoa</taxon>
        <taxon>Chordata</taxon>
        <taxon>Craniata</taxon>
        <taxon>Vertebrata</taxon>
        <taxon>Euteleostomi</taxon>
        <taxon>Archelosauria</taxon>
        <taxon>Archosauria</taxon>
        <taxon>Dinosauria</taxon>
        <taxon>Saurischia</taxon>
        <taxon>Theropoda</taxon>
        <taxon>Coelurosauria</taxon>
        <taxon>Aves</taxon>
        <taxon>Neognathae</taxon>
        <taxon>Galloanserae</taxon>
        <taxon>Galliformes</taxon>
        <taxon>Phasianidae</taxon>
        <taxon>Phasianinae</taxon>
        <taxon>Gallus</taxon>
    </lineage>
</organism>
<sequence length="349" mass="39835">MTHQTGIHATTELRDFFAKARNGSVRLIKVIIEEEQLVLGAHKELARRWDVDYDAFVLPLLDEQQPCYVLYRLDSQNAQGYEWLFISWSPDNSPVRLKMLYAATRATVKKEFGGGHIKDEMFGTVKEDVSLSGYQKHVSSCSAPAPLTAAEQELQQIRINEVKTEISVESKHQTLQGLAFPLQLDAQQAIQTLKQKKINYIQLKLDLERETIDLVHTSPTDISDLPKRIPQDSARYHFFLYKHSHEGDYLESVVFIYSMPGYKCSIKERMLYSSCKSRLLDTVEQEFCLEIAKKIEIDDGAELTAEFLYDEVHPKQHAFKQAFAKPKGPVGKRGQKRLIKGPGENGEDS</sequence>
<keyword id="KW-0009">Actin-binding</keyword>
<keyword id="KW-0963">Cytoplasm</keyword>
<keyword id="KW-0206">Cytoskeleton</keyword>
<keyword id="KW-1185">Reference proteome</keyword>
<keyword id="KW-0677">Repeat</keyword>
<reference key="1">
    <citation type="journal article" date="2005" name="Genome Biol.">
        <title>Full-length cDNAs from chicken bursal lymphocytes to facilitate gene function analysis.</title>
        <authorList>
            <person name="Caldwell R.B."/>
            <person name="Kierzek A.M."/>
            <person name="Arakawa H."/>
            <person name="Bezzubov Y."/>
            <person name="Zaim J."/>
            <person name="Fiedler P."/>
            <person name="Kutter S."/>
            <person name="Blagodatski A."/>
            <person name="Kostovska D."/>
            <person name="Koter M."/>
            <person name="Plachy J."/>
            <person name="Carninci P."/>
            <person name="Hayashizaki Y."/>
            <person name="Buerstedde J.-M."/>
        </authorList>
    </citation>
    <scope>NUCLEOTIDE SEQUENCE [LARGE SCALE MRNA]</scope>
    <source>
        <strain>CB</strain>
        <tissue>Bursa of Fabricius</tissue>
    </source>
</reference>
<reference key="2">
    <citation type="journal article" date="2009" name="J. Neurosci.">
        <title>Twinfilin 2 regulates actin filament lengths in cochlear stereocilia.</title>
        <authorList>
            <person name="Peng A.W."/>
            <person name="Belyantseva I.A."/>
            <person name="Hsu P.D."/>
            <person name="Friedman T.B."/>
            <person name="Heller S."/>
        </authorList>
    </citation>
    <scope>IDENTIFICATION BY MASS SPECTROMETRY</scope>
    <source>
        <tissue>Cochlea</tissue>
    </source>
</reference>
<feature type="chain" id="PRO_0000233139" description="Twinfilin-2">
    <location>
        <begin position="1"/>
        <end position="349"/>
    </location>
</feature>
<feature type="domain" description="ADF-H 1" evidence="2">
    <location>
        <begin position="4"/>
        <end position="139"/>
    </location>
</feature>
<feature type="domain" description="ADF-H 2" evidence="2">
    <location>
        <begin position="177"/>
        <end position="313"/>
    </location>
</feature>
<feature type="region of interest" description="Disordered" evidence="3">
    <location>
        <begin position="324"/>
        <end position="349"/>
    </location>
</feature>
<name>TWF2_CHICK</name>
<protein>
    <recommendedName>
        <fullName>Twinfilin-2</fullName>
    </recommendedName>
</protein>
<evidence type="ECO:0000250" key="1"/>
<evidence type="ECO:0000255" key="2">
    <source>
        <dbReference type="PROSITE-ProRule" id="PRU00599"/>
    </source>
</evidence>
<evidence type="ECO:0000256" key="3">
    <source>
        <dbReference type="SAM" id="MobiDB-lite"/>
    </source>
</evidence>
<evidence type="ECO:0000305" key="4"/>
<gene>
    <name type="primary">TWF2</name>
    <name type="ORF">RCJMB04_3e19</name>
</gene>
<comment type="function">
    <text evidence="1">Actin-binding protein involved in motile and morphological processes. Inhibits actin polymerization, likely by sequestering G-actin (By similarity).</text>
</comment>
<comment type="subunit">
    <text evidence="1">Interacts with G-actin; ADP-actin form and capping protein (CP).</text>
</comment>
<comment type="subcellular location">
    <subcellularLocation>
        <location evidence="1">Cytoplasm</location>
        <location evidence="1">Cytoskeleton</location>
    </subcellularLocation>
    <subcellularLocation>
        <location evidence="1">Cytoplasm</location>
        <location evidence="1">Perinuclear region</location>
    </subcellularLocation>
    <text evidence="1">Perinuclear and G-actin-rich cortical actin structure sublocalization.</text>
</comment>
<comment type="similarity">
    <text evidence="4">Belongs to the actin-binding proteins ADF family. Twinfilin subfamily.</text>
</comment>
<comment type="online information" name="Protein Spotlight">
    <link uri="https://www.proteinspotlight.org/back_issues/073"/>
    <text>Molecular embrace - Issue 73 of August 2006</text>
</comment>
<proteinExistence type="evidence at protein level"/>
<accession>Q5ZM35</accession>